<gene>
    <name type="primary">gfcA</name>
    <name type="synonym">ymcD</name>
    <name type="ordered locus">b0987</name>
    <name type="ordered locus">JW5133</name>
</gene>
<dbReference type="EMBL" id="U00096">
    <property type="protein sequence ID" value="AAC74072.2"/>
    <property type="molecule type" value="Genomic_DNA"/>
</dbReference>
<dbReference type="EMBL" id="AP009048">
    <property type="protein sequence ID" value="BAA35752.2"/>
    <property type="molecule type" value="Genomic_DNA"/>
</dbReference>
<dbReference type="PIR" id="A64840">
    <property type="entry name" value="A64840"/>
</dbReference>
<dbReference type="RefSeq" id="NP_415507.2">
    <property type="nucleotide sequence ID" value="NC_000913.3"/>
</dbReference>
<dbReference type="RefSeq" id="WP_001295358.1">
    <property type="nucleotide sequence ID" value="NZ_SSZK01000002.1"/>
</dbReference>
<dbReference type="BioGRID" id="4262044">
    <property type="interactions" value="9"/>
</dbReference>
<dbReference type="DIP" id="DIP-12710N"/>
<dbReference type="FunCoup" id="P75885">
    <property type="interactions" value="17"/>
</dbReference>
<dbReference type="IntAct" id="P75885">
    <property type="interactions" value="2"/>
</dbReference>
<dbReference type="STRING" id="511145.b0987"/>
<dbReference type="PaxDb" id="511145-b0987"/>
<dbReference type="EnsemblBacteria" id="AAC74072">
    <property type="protein sequence ID" value="AAC74072"/>
    <property type="gene ID" value="b0987"/>
</dbReference>
<dbReference type="GeneID" id="945029"/>
<dbReference type="KEGG" id="ecj:JW5133"/>
<dbReference type="KEGG" id="eco:b0987"/>
<dbReference type="KEGG" id="ecoc:C3026_06015"/>
<dbReference type="PATRIC" id="fig|511145.12.peg.1022"/>
<dbReference type="EchoBASE" id="EB3496"/>
<dbReference type="eggNOG" id="ENOG5033YAD">
    <property type="taxonomic scope" value="Bacteria"/>
</dbReference>
<dbReference type="InParanoid" id="P75885"/>
<dbReference type="OMA" id="NIHIGIL"/>
<dbReference type="BioCyc" id="EcoCyc:G6508-MONOMER"/>
<dbReference type="PRO" id="PR:P75885"/>
<dbReference type="Proteomes" id="UP000000625">
    <property type="component" value="Chromosome"/>
</dbReference>
<dbReference type="GO" id="GO:0005886">
    <property type="term" value="C:plasma membrane"/>
    <property type="evidence" value="ECO:0000314"/>
    <property type="project" value="EcoCyc"/>
</dbReference>
<sequence length="101" mass="9508">MKHKLSAILMAFMLTTPAAFAAPEATNGTEATTGTTGTTTTTTGATTTATTTGGVAAGAVGTATVVGVATAVGVATLAVVAANDSGDGGSHNTSTTTSTTR</sequence>
<proteinExistence type="evidence at protein level"/>
<evidence type="ECO:0000255" key="1"/>
<evidence type="ECO:0000256" key="2">
    <source>
        <dbReference type="SAM" id="MobiDB-lite"/>
    </source>
</evidence>
<evidence type="ECO:0000305" key="3"/>
<organism>
    <name type="scientific">Escherichia coli (strain K12)</name>
    <dbReference type="NCBI Taxonomy" id="83333"/>
    <lineage>
        <taxon>Bacteria</taxon>
        <taxon>Pseudomonadati</taxon>
        <taxon>Pseudomonadota</taxon>
        <taxon>Gammaproteobacteria</taxon>
        <taxon>Enterobacterales</taxon>
        <taxon>Enterobacteriaceae</taxon>
        <taxon>Escherichia</taxon>
    </lineage>
</organism>
<accession>P75885</accession>
<keyword id="KW-0997">Cell inner membrane</keyword>
<keyword id="KW-1003">Cell membrane</keyword>
<keyword id="KW-0472">Membrane</keyword>
<keyword id="KW-1185">Reference proteome</keyword>
<keyword id="KW-0732">Signal</keyword>
<keyword id="KW-0812">Transmembrane</keyword>
<keyword id="KW-1133">Transmembrane helix</keyword>
<protein>
    <recommendedName>
        <fullName>Threonine-rich inner membrane protein GfcA</fullName>
    </recommendedName>
    <alternativeName>
        <fullName>Group 4 capsule protein A homolog</fullName>
    </alternativeName>
</protein>
<reference key="1">
    <citation type="journal article" date="1996" name="DNA Res.">
        <title>A 718-kb DNA sequence of the Escherichia coli K-12 genome corresponding to the 12.7-28.0 min region on the linkage map.</title>
        <authorList>
            <person name="Oshima T."/>
            <person name="Aiba H."/>
            <person name="Baba T."/>
            <person name="Fujita K."/>
            <person name="Hayashi K."/>
            <person name="Honjo A."/>
            <person name="Ikemoto K."/>
            <person name="Inada T."/>
            <person name="Itoh T."/>
            <person name="Kajihara M."/>
            <person name="Kanai K."/>
            <person name="Kashimoto K."/>
            <person name="Kimura S."/>
            <person name="Kitagawa M."/>
            <person name="Makino K."/>
            <person name="Masuda S."/>
            <person name="Miki T."/>
            <person name="Mizobuchi K."/>
            <person name="Mori H."/>
            <person name="Motomura K."/>
            <person name="Nakamura Y."/>
            <person name="Nashimoto H."/>
            <person name="Nishio Y."/>
            <person name="Saito N."/>
            <person name="Sampei G."/>
            <person name="Seki Y."/>
            <person name="Tagami H."/>
            <person name="Takemoto K."/>
            <person name="Wada C."/>
            <person name="Yamamoto Y."/>
            <person name="Yano M."/>
            <person name="Horiuchi T."/>
        </authorList>
    </citation>
    <scope>NUCLEOTIDE SEQUENCE [LARGE SCALE GENOMIC DNA]</scope>
    <source>
        <strain>K12 / W3110 / ATCC 27325 / DSM 5911</strain>
    </source>
</reference>
<reference key="2">
    <citation type="journal article" date="1997" name="Science">
        <title>The complete genome sequence of Escherichia coli K-12.</title>
        <authorList>
            <person name="Blattner F.R."/>
            <person name="Plunkett G. III"/>
            <person name="Bloch C.A."/>
            <person name="Perna N.T."/>
            <person name="Burland V."/>
            <person name="Riley M."/>
            <person name="Collado-Vides J."/>
            <person name="Glasner J.D."/>
            <person name="Rode C.K."/>
            <person name="Mayhew G.F."/>
            <person name="Gregor J."/>
            <person name="Davis N.W."/>
            <person name="Kirkpatrick H.A."/>
            <person name="Goeden M.A."/>
            <person name="Rose D.J."/>
            <person name="Mau B."/>
            <person name="Shao Y."/>
        </authorList>
    </citation>
    <scope>NUCLEOTIDE SEQUENCE [LARGE SCALE GENOMIC DNA]</scope>
    <source>
        <strain>K12 / MG1655 / ATCC 47076</strain>
    </source>
</reference>
<reference key="3">
    <citation type="journal article" date="2006" name="Mol. Syst. Biol.">
        <title>Highly accurate genome sequences of Escherichia coli K-12 strains MG1655 and W3110.</title>
        <authorList>
            <person name="Hayashi K."/>
            <person name="Morooka N."/>
            <person name="Yamamoto Y."/>
            <person name="Fujita K."/>
            <person name="Isono K."/>
            <person name="Choi S."/>
            <person name="Ohtsubo E."/>
            <person name="Baba T."/>
            <person name="Wanner B.L."/>
            <person name="Mori H."/>
            <person name="Horiuchi T."/>
        </authorList>
    </citation>
    <scope>NUCLEOTIDE SEQUENCE [LARGE SCALE GENOMIC DNA]</scope>
    <source>
        <strain>K12 / W3110 / ATCC 27325 / DSM 5911</strain>
    </source>
</reference>
<reference key="4">
    <citation type="journal article" date="2005" name="Science">
        <title>Global topology analysis of the Escherichia coli inner membrane proteome.</title>
        <authorList>
            <person name="Daley D.O."/>
            <person name="Rapp M."/>
            <person name="Granseth E."/>
            <person name="Melen K."/>
            <person name="Drew D."/>
            <person name="von Heijne G."/>
        </authorList>
    </citation>
    <scope>TOPOLOGY [LARGE SCALE ANALYSIS]</scope>
    <source>
        <strain>K12 / MG1655 / ATCC 47076</strain>
    </source>
</reference>
<comment type="subcellular location">
    <subcellularLocation>
        <location>Cell inner membrane</location>
        <topology>Single-pass membrane protein</topology>
    </subcellularLocation>
    <text>When the protein is overexpressed.</text>
</comment>
<comment type="caution">
    <text evidence="3">In E.coli K12 / MG1655 and K12 / W3110 this operon is silenced by an IS1D insertion in the promoter region.</text>
</comment>
<feature type="signal peptide" evidence="1">
    <location>
        <begin position="1"/>
        <end position="21"/>
    </location>
</feature>
<feature type="chain" id="PRO_0000168799" description="Threonine-rich inner membrane protein GfcA">
    <location>
        <begin position="22"/>
        <end position="101"/>
    </location>
</feature>
<feature type="topological domain" description="Cytoplasmic" evidence="1">
    <location>
        <begin position="22"/>
        <end position="59"/>
    </location>
</feature>
<feature type="transmembrane region" description="Helical" evidence="1">
    <location>
        <begin position="60"/>
        <end position="80"/>
    </location>
</feature>
<feature type="topological domain" description="Periplasmic" evidence="1">
    <location>
        <begin position="81"/>
        <end position="101"/>
    </location>
</feature>
<feature type="region of interest" description="Disordered" evidence="2">
    <location>
        <begin position="24"/>
        <end position="45"/>
    </location>
</feature>
<feature type="region of interest" description="Disordered" evidence="2">
    <location>
        <begin position="82"/>
        <end position="101"/>
    </location>
</feature>
<name>GFCA_ECOLI</name>